<comment type="function">
    <text evidence="1 2">Induces disassembly of actin filaments in conjunction with ADF/cofilin family proteins. Enhances cofilin-mediated actin severing. Involved in cytokinesis. Involved in chemotactic cell migration by restricting lamellipodial membrane protrusions. Involved in myocardium sarcomere organization. Required for cardiomyocyte growth and maintenance. Involved in megakaryocyte maturation and platelet shedding. Required for the establishment of planar cell polarity (PCP) during follicular epithelium development and for cell shape changes during PCP; the function seems to implicate cooperation with CFL1 and/or DSTN/ADF. Involved in the generation/maintenance of cortical tension. Involved in assembly and maintenance of epithelial apical cell junctions and plays a role in the organization of the perijunctional actomyosin belt (By similarity).</text>
</comment>
<comment type="subcellular location">
    <subcellularLocation>
        <location evidence="3">Cytoplasm</location>
        <location evidence="3">Cytoskeleton</location>
    </subcellularLocation>
    <subcellularLocation>
        <location evidence="1">Cell projection</location>
        <location evidence="1">Podosome</location>
    </subcellularLocation>
</comment>
<comment type="similarity">
    <text evidence="4">Belongs to the WD repeat AIP1 family.</text>
</comment>
<feature type="chain" id="PRO_0000259955" description="WD repeat-containing protein 1">
    <location>
        <begin position="1"/>
        <end position="606"/>
    </location>
</feature>
<feature type="repeat" description="WD 1">
    <location>
        <begin position="4"/>
        <end position="45"/>
    </location>
</feature>
<feature type="repeat" description="WD 2">
    <location>
        <begin position="48"/>
        <end position="87"/>
    </location>
</feature>
<feature type="repeat" description="WD 3">
    <location>
        <begin position="93"/>
        <end position="135"/>
    </location>
</feature>
<feature type="repeat" description="WD 4">
    <location>
        <begin position="138"/>
        <end position="176"/>
    </location>
</feature>
<feature type="repeat" description="WD 5">
    <location>
        <begin position="180"/>
        <end position="218"/>
    </location>
</feature>
<feature type="repeat" description="WD 6">
    <location>
        <begin position="224"/>
        <end position="263"/>
    </location>
</feature>
<feature type="repeat" description="WD 7">
    <location>
        <begin position="270"/>
        <end position="306"/>
    </location>
</feature>
<feature type="repeat" description="WD 8">
    <location>
        <begin position="311"/>
        <end position="351"/>
    </location>
</feature>
<feature type="repeat" description="WD 9">
    <location>
        <begin position="358"/>
        <end position="408"/>
    </location>
</feature>
<feature type="repeat" description="WD 10">
    <location>
        <begin position="432"/>
        <end position="474"/>
    </location>
</feature>
<feature type="repeat" description="WD 11">
    <location>
        <begin position="480"/>
        <end position="518"/>
    </location>
</feature>
<feature type="repeat" description="WD 12">
    <location>
        <begin position="523"/>
        <end position="561"/>
    </location>
</feature>
<feature type="repeat" description="WD 13">
    <location>
        <begin position="566"/>
        <end position="604"/>
    </location>
</feature>
<feature type="modified residue" description="N6-acetyllysine" evidence="1">
    <location>
        <position position="28"/>
    </location>
</feature>
<feature type="modified residue" description="N6-acetyllysine" evidence="1">
    <location>
        <position position="81"/>
    </location>
</feature>
<feature type="modified residue" description="N6-acetyllysine" evidence="1">
    <location>
        <position position="95"/>
    </location>
</feature>
<feature type="modified residue" description="N6-acetyllysine" evidence="1">
    <location>
        <position position="115"/>
    </location>
</feature>
<feature type="modified residue" description="Phosphotyrosine" evidence="1">
    <location>
        <position position="238"/>
    </location>
</feature>
<feature type="modified residue" description="N6-acetyllysine" evidence="1">
    <location>
        <position position="480"/>
    </location>
</feature>
<dbReference type="EMBL" id="BC105341">
    <property type="protein sequence ID" value="AAI05342.1"/>
    <property type="molecule type" value="mRNA"/>
</dbReference>
<dbReference type="RefSeq" id="NP_001039811.1">
    <property type="nucleotide sequence ID" value="NM_001046346.2"/>
</dbReference>
<dbReference type="SMR" id="Q2KJH4"/>
<dbReference type="FunCoup" id="Q2KJH4">
    <property type="interactions" value="2704"/>
</dbReference>
<dbReference type="STRING" id="9913.ENSBTAP00000018092"/>
<dbReference type="PaxDb" id="9913-ENSBTAP00000018092"/>
<dbReference type="PeptideAtlas" id="Q2KJH4"/>
<dbReference type="GeneID" id="533223"/>
<dbReference type="KEGG" id="bta:533223"/>
<dbReference type="CTD" id="9948"/>
<dbReference type="eggNOG" id="KOG0318">
    <property type="taxonomic scope" value="Eukaryota"/>
</dbReference>
<dbReference type="InParanoid" id="Q2KJH4"/>
<dbReference type="OrthoDB" id="2306at2759"/>
<dbReference type="Proteomes" id="UP000009136">
    <property type="component" value="Unplaced"/>
</dbReference>
<dbReference type="GO" id="GO:0070161">
    <property type="term" value="C:anchoring junction"/>
    <property type="evidence" value="ECO:0007669"/>
    <property type="project" value="UniProtKB-KW"/>
</dbReference>
<dbReference type="GO" id="GO:0042995">
    <property type="term" value="C:cell projection"/>
    <property type="evidence" value="ECO:0007669"/>
    <property type="project" value="UniProtKB-KW"/>
</dbReference>
<dbReference type="GO" id="GO:0030864">
    <property type="term" value="C:cortical actin cytoskeleton"/>
    <property type="evidence" value="ECO:0000318"/>
    <property type="project" value="GO_Central"/>
</dbReference>
<dbReference type="GO" id="GO:0002102">
    <property type="term" value="C:podosome"/>
    <property type="evidence" value="ECO:0007669"/>
    <property type="project" value="UniProtKB-SubCell"/>
</dbReference>
<dbReference type="GO" id="GO:0051015">
    <property type="term" value="F:actin filament binding"/>
    <property type="evidence" value="ECO:0000250"/>
    <property type="project" value="UniProtKB"/>
</dbReference>
<dbReference type="GO" id="GO:0030042">
    <property type="term" value="P:actin filament depolymerization"/>
    <property type="evidence" value="ECO:0000318"/>
    <property type="project" value="GO_Central"/>
</dbReference>
<dbReference type="GO" id="GO:0040011">
    <property type="term" value="P:locomotion"/>
    <property type="evidence" value="ECO:0000318"/>
    <property type="project" value="GO_Central"/>
</dbReference>
<dbReference type="GO" id="GO:0045214">
    <property type="term" value="P:sarcomere organization"/>
    <property type="evidence" value="ECO:0000318"/>
    <property type="project" value="GO_Central"/>
</dbReference>
<dbReference type="CDD" id="cd00200">
    <property type="entry name" value="WD40"/>
    <property type="match status" value="1"/>
</dbReference>
<dbReference type="FunFam" id="2.130.10.10:FF:000097">
    <property type="entry name" value="WD repeat domain 1"/>
    <property type="match status" value="1"/>
</dbReference>
<dbReference type="FunFam" id="2.130.10.10:FF:000203">
    <property type="entry name" value="WD repeat domain 1"/>
    <property type="match status" value="1"/>
</dbReference>
<dbReference type="Gene3D" id="2.130.10.10">
    <property type="entry name" value="YVTN repeat-like/Quinoprotein amine dehydrogenase"/>
    <property type="match status" value="2"/>
</dbReference>
<dbReference type="InterPro" id="IPR020472">
    <property type="entry name" value="G-protein_beta_WD-40_rep"/>
</dbReference>
<dbReference type="InterPro" id="IPR011045">
    <property type="entry name" value="N2O_reductase_N"/>
</dbReference>
<dbReference type="InterPro" id="IPR015943">
    <property type="entry name" value="WD40/YVTN_repeat-like_dom_sf"/>
</dbReference>
<dbReference type="InterPro" id="IPR019775">
    <property type="entry name" value="WD40_repeat_CS"/>
</dbReference>
<dbReference type="InterPro" id="IPR036322">
    <property type="entry name" value="WD40_repeat_dom_sf"/>
</dbReference>
<dbReference type="InterPro" id="IPR001680">
    <property type="entry name" value="WD40_rpt"/>
</dbReference>
<dbReference type="PANTHER" id="PTHR19856:SF0">
    <property type="entry name" value="WD REPEAT-CONTAINING PROTEIN 1"/>
    <property type="match status" value="1"/>
</dbReference>
<dbReference type="PANTHER" id="PTHR19856">
    <property type="entry name" value="WD-REPEATCONTAINING PROTEIN WDR1"/>
    <property type="match status" value="1"/>
</dbReference>
<dbReference type="Pfam" id="PF00400">
    <property type="entry name" value="WD40"/>
    <property type="match status" value="10"/>
</dbReference>
<dbReference type="PRINTS" id="PR00320">
    <property type="entry name" value="GPROTEINBRPT"/>
</dbReference>
<dbReference type="SMART" id="SM00320">
    <property type="entry name" value="WD40"/>
    <property type="match status" value="11"/>
</dbReference>
<dbReference type="SUPFAM" id="SSF50974">
    <property type="entry name" value="Nitrous oxide reductase, N-terminal domain"/>
    <property type="match status" value="1"/>
</dbReference>
<dbReference type="SUPFAM" id="SSF50978">
    <property type="entry name" value="WD40 repeat-like"/>
    <property type="match status" value="1"/>
</dbReference>
<dbReference type="PROSITE" id="PS00678">
    <property type="entry name" value="WD_REPEATS_1"/>
    <property type="match status" value="1"/>
</dbReference>
<dbReference type="PROSITE" id="PS50082">
    <property type="entry name" value="WD_REPEATS_2"/>
    <property type="match status" value="5"/>
</dbReference>
<dbReference type="PROSITE" id="PS50294">
    <property type="entry name" value="WD_REPEATS_REGION"/>
    <property type="match status" value="1"/>
</dbReference>
<organism>
    <name type="scientific">Bos taurus</name>
    <name type="common">Bovine</name>
    <dbReference type="NCBI Taxonomy" id="9913"/>
    <lineage>
        <taxon>Eukaryota</taxon>
        <taxon>Metazoa</taxon>
        <taxon>Chordata</taxon>
        <taxon>Craniata</taxon>
        <taxon>Vertebrata</taxon>
        <taxon>Euteleostomi</taxon>
        <taxon>Mammalia</taxon>
        <taxon>Eutheria</taxon>
        <taxon>Laurasiatheria</taxon>
        <taxon>Artiodactyla</taxon>
        <taxon>Ruminantia</taxon>
        <taxon>Pecora</taxon>
        <taxon>Bovidae</taxon>
        <taxon>Bovinae</taxon>
        <taxon>Bos</taxon>
    </lineage>
</organism>
<keyword id="KW-0007">Acetylation</keyword>
<keyword id="KW-0009">Actin-binding</keyword>
<keyword id="KW-0965">Cell junction</keyword>
<keyword id="KW-0966">Cell projection</keyword>
<keyword id="KW-0963">Cytoplasm</keyword>
<keyword id="KW-0206">Cytoskeleton</keyword>
<keyword id="KW-0597">Phosphoprotein</keyword>
<keyword id="KW-1185">Reference proteome</keyword>
<keyword id="KW-0677">Repeat</keyword>
<keyword id="KW-0853">WD repeat</keyword>
<reference key="1">
    <citation type="submission" date="2005-09" db="EMBL/GenBank/DDBJ databases">
        <authorList>
            <consortium name="NIH - Mammalian Gene Collection (MGC) project"/>
        </authorList>
    </citation>
    <scope>NUCLEOTIDE SEQUENCE [LARGE SCALE MRNA]</scope>
    <source>
        <strain>Crossbred X Angus</strain>
        <tissue>Ileum</tissue>
    </source>
</reference>
<evidence type="ECO:0000250" key="1">
    <source>
        <dbReference type="UniProtKB" id="O75083"/>
    </source>
</evidence>
<evidence type="ECO:0000250" key="2">
    <source>
        <dbReference type="UniProtKB" id="O88342"/>
    </source>
</evidence>
<evidence type="ECO:0000250" key="3">
    <source>
        <dbReference type="UniProtKB" id="Q5RKI0"/>
    </source>
</evidence>
<evidence type="ECO:0000305" key="4"/>
<protein>
    <recommendedName>
        <fullName>WD repeat-containing protein 1</fullName>
    </recommendedName>
</protein>
<sequence>MPYEIKKVFASLPQVERGVSKIVGGDPKGNSFLYTNGKCVILRNIDNPAIADIYTEHAHQVVVAKYAPSGFYIASGDVSGKLRIWDTTQKEHLLKYEYQPFAGKIKDIAWTEDSKRIAVVGEGREKFGAVFLWDSGSSVGEITGHNKVINSVDIKQSRPYRLVTGSDDNCAAFFEGPPFKFKFTISDHGRFVNCVRFSPDGNRFATASADGQIFIYDGKTGEKVCALGGSKAHDGGIYAISWSPDSTHLLSASGDKTSKIWDVNVNSVVNTFTMGSNVLDQQLGCLWQKDHLLSISLSGYINYLDKNNPSKPLRVIKGHSKSIQCLTVHKNGGKSYIYSGSHDGHINYWDSETGENDSFAGKGHTNQVSRMTVDEHGQLVSCSMDDTVRYTNLTLRDYSGQGVVKLDVQPKCLAVGPGGYTVVVCIGQIVLLKDQRKCFSIDNPGYEPEVVAVHPGGETVAVGGADGNVRLYSILGTTLKDEGKLLEAKGPVTDLAFSHDGAFLAVCDASKVVTVFSVADGYSENNVFYGHHAKIVCLAWSPDNEHFASGGMDMMVYVWTLSDPETRVKIQDAHRLHHVSSLAWLDEHTLVTTSHDASVKEWTIAY</sequence>
<gene>
    <name type="primary">WDR1</name>
</gene>
<accession>Q2KJH4</accession>
<proteinExistence type="evidence at transcript level"/>
<name>WDR1_BOVIN</name>